<proteinExistence type="inferred from homology"/>
<sequence length="122" mass="13254">MIQMQTILDVADNSGAKKLFCIKVLGGSKRKYAGVGDIIVASVREALPNSKVKKGDVVKAVIVRTAKELGRPDGSYIRFDDNSGVVINNQKEPVGTRIFGPVARELRAKKFMKIISLAPEVL</sequence>
<reference key="1">
    <citation type="submission" date="2006-10" db="EMBL/GenBank/DDBJ databases">
        <title>Complete sequence of chromosome of Pelobacter propionicus DSM 2379.</title>
        <authorList>
            <consortium name="US DOE Joint Genome Institute"/>
            <person name="Copeland A."/>
            <person name="Lucas S."/>
            <person name="Lapidus A."/>
            <person name="Barry K."/>
            <person name="Detter J.C."/>
            <person name="Glavina del Rio T."/>
            <person name="Hammon N."/>
            <person name="Israni S."/>
            <person name="Dalin E."/>
            <person name="Tice H."/>
            <person name="Pitluck S."/>
            <person name="Saunders E."/>
            <person name="Brettin T."/>
            <person name="Bruce D."/>
            <person name="Han C."/>
            <person name="Tapia R."/>
            <person name="Schmutz J."/>
            <person name="Larimer F."/>
            <person name="Land M."/>
            <person name="Hauser L."/>
            <person name="Kyrpides N."/>
            <person name="Kim E."/>
            <person name="Lovley D."/>
            <person name="Richardson P."/>
        </authorList>
    </citation>
    <scope>NUCLEOTIDE SEQUENCE [LARGE SCALE GENOMIC DNA]</scope>
    <source>
        <strain>DSM 2379 / NBRC 103807 / OttBd1</strain>
    </source>
</reference>
<comment type="function">
    <text evidence="1">Binds to 23S rRNA. Forms part of two intersubunit bridges in the 70S ribosome.</text>
</comment>
<comment type="subunit">
    <text evidence="1">Part of the 50S ribosomal subunit. Forms a cluster with proteins L3 and L19. In the 70S ribosome, L14 and L19 interact and together make contacts with the 16S rRNA in bridges B5 and B8.</text>
</comment>
<comment type="similarity">
    <text evidence="1">Belongs to the universal ribosomal protein uL14 family.</text>
</comment>
<evidence type="ECO:0000255" key="1">
    <source>
        <dbReference type="HAMAP-Rule" id="MF_01367"/>
    </source>
</evidence>
<evidence type="ECO:0000305" key="2"/>
<dbReference type="EMBL" id="CP000482">
    <property type="protein sequence ID" value="ABK98321.1"/>
    <property type="molecule type" value="Genomic_DNA"/>
</dbReference>
<dbReference type="RefSeq" id="WP_011734633.1">
    <property type="nucleotide sequence ID" value="NC_008609.1"/>
</dbReference>
<dbReference type="SMR" id="A1ALV1"/>
<dbReference type="STRING" id="338966.Ppro_0690"/>
<dbReference type="KEGG" id="ppd:Ppro_0690"/>
<dbReference type="eggNOG" id="COG0093">
    <property type="taxonomic scope" value="Bacteria"/>
</dbReference>
<dbReference type="HOGENOM" id="CLU_095071_2_1_7"/>
<dbReference type="OrthoDB" id="9806379at2"/>
<dbReference type="Proteomes" id="UP000006732">
    <property type="component" value="Chromosome"/>
</dbReference>
<dbReference type="GO" id="GO:0022625">
    <property type="term" value="C:cytosolic large ribosomal subunit"/>
    <property type="evidence" value="ECO:0007669"/>
    <property type="project" value="TreeGrafter"/>
</dbReference>
<dbReference type="GO" id="GO:0070180">
    <property type="term" value="F:large ribosomal subunit rRNA binding"/>
    <property type="evidence" value="ECO:0007669"/>
    <property type="project" value="TreeGrafter"/>
</dbReference>
<dbReference type="GO" id="GO:0003735">
    <property type="term" value="F:structural constituent of ribosome"/>
    <property type="evidence" value="ECO:0007669"/>
    <property type="project" value="InterPro"/>
</dbReference>
<dbReference type="GO" id="GO:0006412">
    <property type="term" value="P:translation"/>
    <property type="evidence" value="ECO:0007669"/>
    <property type="project" value="UniProtKB-UniRule"/>
</dbReference>
<dbReference type="CDD" id="cd00337">
    <property type="entry name" value="Ribosomal_uL14"/>
    <property type="match status" value="1"/>
</dbReference>
<dbReference type="FunFam" id="2.40.150.20:FF:000001">
    <property type="entry name" value="50S ribosomal protein L14"/>
    <property type="match status" value="1"/>
</dbReference>
<dbReference type="Gene3D" id="2.40.150.20">
    <property type="entry name" value="Ribosomal protein L14"/>
    <property type="match status" value="1"/>
</dbReference>
<dbReference type="HAMAP" id="MF_01367">
    <property type="entry name" value="Ribosomal_uL14"/>
    <property type="match status" value="1"/>
</dbReference>
<dbReference type="InterPro" id="IPR000218">
    <property type="entry name" value="Ribosomal_uL14"/>
</dbReference>
<dbReference type="InterPro" id="IPR005745">
    <property type="entry name" value="Ribosomal_uL14_bac-type"/>
</dbReference>
<dbReference type="InterPro" id="IPR019972">
    <property type="entry name" value="Ribosomal_uL14_CS"/>
</dbReference>
<dbReference type="InterPro" id="IPR036853">
    <property type="entry name" value="Ribosomal_uL14_sf"/>
</dbReference>
<dbReference type="NCBIfam" id="TIGR01067">
    <property type="entry name" value="rplN_bact"/>
    <property type="match status" value="1"/>
</dbReference>
<dbReference type="PANTHER" id="PTHR11761">
    <property type="entry name" value="50S/60S RIBOSOMAL PROTEIN L14/L23"/>
    <property type="match status" value="1"/>
</dbReference>
<dbReference type="PANTHER" id="PTHR11761:SF3">
    <property type="entry name" value="LARGE RIBOSOMAL SUBUNIT PROTEIN UL14M"/>
    <property type="match status" value="1"/>
</dbReference>
<dbReference type="Pfam" id="PF00238">
    <property type="entry name" value="Ribosomal_L14"/>
    <property type="match status" value="1"/>
</dbReference>
<dbReference type="SMART" id="SM01374">
    <property type="entry name" value="Ribosomal_L14"/>
    <property type="match status" value="1"/>
</dbReference>
<dbReference type="SUPFAM" id="SSF50193">
    <property type="entry name" value="Ribosomal protein L14"/>
    <property type="match status" value="1"/>
</dbReference>
<dbReference type="PROSITE" id="PS00049">
    <property type="entry name" value="RIBOSOMAL_L14"/>
    <property type="match status" value="1"/>
</dbReference>
<keyword id="KW-1185">Reference proteome</keyword>
<keyword id="KW-0687">Ribonucleoprotein</keyword>
<keyword id="KW-0689">Ribosomal protein</keyword>
<keyword id="KW-0694">RNA-binding</keyword>
<keyword id="KW-0699">rRNA-binding</keyword>
<gene>
    <name evidence="1" type="primary">rplN</name>
    <name type="ordered locus">Ppro_0690</name>
</gene>
<name>RL14_PELPD</name>
<organism>
    <name type="scientific">Pelobacter propionicus (strain DSM 2379 / NBRC 103807 / OttBd1)</name>
    <dbReference type="NCBI Taxonomy" id="338966"/>
    <lineage>
        <taxon>Bacteria</taxon>
        <taxon>Pseudomonadati</taxon>
        <taxon>Thermodesulfobacteriota</taxon>
        <taxon>Desulfuromonadia</taxon>
        <taxon>Desulfuromonadales</taxon>
        <taxon>Desulfuromonadaceae</taxon>
        <taxon>Pelobacter</taxon>
    </lineage>
</organism>
<accession>A1ALV1</accession>
<feature type="chain" id="PRO_1000055662" description="Large ribosomal subunit protein uL14">
    <location>
        <begin position="1"/>
        <end position="122"/>
    </location>
</feature>
<protein>
    <recommendedName>
        <fullName evidence="1">Large ribosomal subunit protein uL14</fullName>
    </recommendedName>
    <alternativeName>
        <fullName evidence="2">50S ribosomal protein L14</fullName>
    </alternativeName>
</protein>